<reference key="1">
    <citation type="journal article" date="2009" name="Appl. Environ. Microbiol.">
        <title>Novel features of the polysaccharide-digesting gliding bacterium Flavobacterium johnsoniae as revealed by genome sequence analysis.</title>
        <authorList>
            <person name="McBride M.J."/>
            <person name="Xie G."/>
            <person name="Martens E.C."/>
            <person name="Lapidus A."/>
            <person name="Henrissat B."/>
            <person name="Rhodes R.G."/>
            <person name="Goltsman E."/>
            <person name="Wang W."/>
            <person name="Xu J."/>
            <person name="Hunnicutt D.W."/>
            <person name="Staroscik A.M."/>
            <person name="Hoover T.R."/>
            <person name="Cheng Y.Q."/>
            <person name="Stein J.L."/>
        </authorList>
    </citation>
    <scope>NUCLEOTIDE SEQUENCE [LARGE SCALE GENOMIC DNA]</scope>
    <source>
        <strain>ATCC 17061 / DSM 2064 / JCM 8514 / BCRC 14874 / CCUG 350202 / NBRC 14942 / NCIMB 11054 / UW101</strain>
    </source>
</reference>
<feature type="chain" id="PRO_0000374835" description="Ribosomal protein uS12 methylthiotransferase RimO">
    <location>
        <begin position="1"/>
        <end position="437"/>
    </location>
</feature>
<feature type="domain" description="MTTase N-terminal" evidence="1">
    <location>
        <begin position="9"/>
        <end position="128"/>
    </location>
</feature>
<feature type="domain" description="Radical SAM core" evidence="2">
    <location>
        <begin position="138"/>
        <end position="368"/>
    </location>
</feature>
<feature type="domain" description="TRAM" evidence="1">
    <location>
        <begin position="371"/>
        <end position="437"/>
    </location>
</feature>
<feature type="binding site" evidence="1">
    <location>
        <position position="18"/>
    </location>
    <ligand>
        <name>[4Fe-4S] cluster</name>
        <dbReference type="ChEBI" id="CHEBI:49883"/>
        <label>1</label>
    </ligand>
</feature>
<feature type="binding site" evidence="1">
    <location>
        <position position="57"/>
    </location>
    <ligand>
        <name>[4Fe-4S] cluster</name>
        <dbReference type="ChEBI" id="CHEBI:49883"/>
        <label>1</label>
    </ligand>
</feature>
<feature type="binding site" evidence="1">
    <location>
        <position position="91"/>
    </location>
    <ligand>
        <name>[4Fe-4S] cluster</name>
        <dbReference type="ChEBI" id="CHEBI:49883"/>
        <label>1</label>
    </ligand>
</feature>
<feature type="binding site" evidence="1">
    <location>
        <position position="152"/>
    </location>
    <ligand>
        <name>[4Fe-4S] cluster</name>
        <dbReference type="ChEBI" id="CHEBI:49883"/>
        <label>2</label>
        <note>4Fe-4S-S-AdoMet</note>
    </ligand>
</feature>
<feature type="binding site" evidence="1">
    <location>
        <position position="156"/>
    </location>
    <ligand>
        <name>[4Fe-4S] cluster</name>
        <dbReference type="ChEBI" id="CHEBI:49883"/>
        <label>2</label>
        <note>4Fe-4S-S-AdoMet</note>
    </ligand>
</feature>
<feature type="binding site" evidence="1">
    <location>
        <position position="159"/>
    </location>
    <ligand>
        <name>[4Fe-4S] cluster</name>
        <dbReference type="ChEBI" id="CHEBI:49883"/>
        <label>2</label>
        <note>4Fe-4S-S-AdoMet</note>
    </ligand>
</feature>
<proteinExistence type="inferred from homology"/>
<evidence type="ECO:0000255" key="1">
    <source>
        <dbReference type="HAMAP-Rule" id="MF_01865"/>
    </source>
</evidence>
<evidence type="ECO:0000255" key="2">
    <source>
        <dbReference type="PROSITE-ProRule" id="PRU01266"/>
    </source>
</evidence>
<protein>
    <recommendedName>
        <fullName evidence="1">Ribosomal protein uS12 methylthiotransferase RimO</fullName>
        <shortName evidence="1">uS12 MTTase</shortName>
        <shortName evidence="1">uS12 methylthiotransferase</shortName>
        <ecNumber evidence="1">2.8.4.4</ecNumber>
    </recommendedName>
    <alternativeName>
        <fullName evidence="1">Ribosomal protein uS12 (aspartate-C(3))-methylthiotransferase</fullName>
    </alternativeName>
    <alternativeName>
        <fullName evidence="1">Ribosome maturation factor RimO</fullName>
    </alternativeName>
</protein>
<organism>
    <name type="scientific">Flavobacterium johnsoniae (strain ATCC 17061 / DSM 2064 / JCM 8514 / BCRC 14874 / CCUG 350202 / NBRC 14942 / NCIMB 11054 / UW101)</name>
    <name type="common">Cytophaga johnsonae</name>
    <dbReference type="NCBI Taxonomy" id="376686"/>
    <lineage>
        <taxon>Bacteria</taxon>
        <taxon>Pseudomonadati</taxon>
        <taxon>Bacteroidota</taxon>
        <taxon>Flavobacteriia</taxon>
        <taxon>Flavobacteriales</taxon>
        <taxon>Flavobacteriaceae</taxon>
        <taxon>Flavobacterium</taxon>
    </lineage>
</organism>
<comment type="function">
    <text evidence="1">Catalyzes the methylthiolation of an aspartic acid residue of ribosomal protein uS12.</text>
</comment>
<comment type="catalytic activity">
    <reaction evidence="1">
        <text>L-aspartate(89)-[ribosomal protein uS12]-hydrogen + (sulfur carrier)-SH + AH2 + 2 S-adenosyl-L-methionine = 3-methylsulfanyl-L-aspartate(89)-[ribosomal protein uS12]-hydrogen + (sulfur carrier)-H + 5'-deoxyadenosine + L-methionine + A + S-adenosyl-L-homocysteine + 2 H(+)</text>
        <dbReference type="Rhea" id="RHEA:37087"/>
        <dbReference type="Rhea" id="RHEA-COMP:10460"/>
        <dbReference type="Rhea" id="RHEA-COMP:10461"/>
        <dbReference type="Rhea" id="RHEA-COMP:14737"/>
        <dbReference type="Rhea" id="RHEA-COMP:14739"/>
        <dbReference type="ChEBI" id="CHEBI:13193"/>
        <dbReference type="ChEBI" id="CHEBI:15378"/>
        <dbReference type="ChEBI" id="CHEBI:17319"/>
        <dbReference type="ChEBI" id="CHEBI:17499"/>
        <dbReference type="ChEBI" id="CHEBI:29917"/>
        <dbReference type="ChEBI" id="CHEBI:29961"/>
        <dbReference type="ChEBI" id="CHEBI:57844"/>
        <dbReference type="ChEBI" id="CHEBI:57856"/>
        <dbReference type="ChEBI" id="CHEBI:59789"/>
        <dbReference type="ChEBI" id="CHEBI:64428"/>
        <dbReference type="ChEBI" id="CHEBI:73599"/>
        <dbReference type="EC" id="2.8.4.4"/>
    </reaction>
</comment>
<comment type="cofactor">
    <cofactor evidence="1">
        <name>[4Fe-4S] cluster</name>
        <dbReference type="ChEBI" id="CHEBI:49883"/>
    </cofactor>
    <text evidence="1">Binds 2 [4Fe-4S] clusters. One cluster is coordinated with 3 cysteines and an exchangeable S-adenosyl-L-methionine.</text>
</comment>
<comment type="subcellular location">
    <subcellularLocation>
        <location evidence="1">Cytoplasm</location>
    </subcellularLocation>
</comment>
<comment type="similarity">
    <text evidence="1">Belongs to the methylthiotransferase family. RimO subfamily.</text>
</comment>
<name>RIMO_FLAJ1</name>
<sequence length="437" mass="49497">MRTKSLKKNKINVITLGCSKNVYDSEVLMGQLRANGKEVTHEATAKDEGNIIVINTCGFIDNAKAESVNMILEYADKKDKGLVDKVFVTGCLSERYRPDLEKEIPNVDQYFGTTELPQLLKALGADYKHELLGERLTTTPKNYAYLKIAEGCDRPCSFCAIPLMRGSHVSQPIEKLVKEAQGLAKNGVKELILIAQDLTYYGLDLYKKRNLAELLEALAAVEGIEWIRLHYAYPTGFPMDVLELMKREPKICNYIDIPLQHISDSILKSMRRGTTQAKTTQLLKDFRAAVPGMAIRTTLIVGYPGETQEDFEILKEFVQEMKFDRMGCFAYSHEENTHAYLLEDDVPDDVKQARANEIMELQSQISWDLNQEKVGQVFRCIIDRKEGAHFVGRTEFDSPDVDNEVLIDASKHYVKTGEFVNIKIIEATEFDLYGEPA</sequence>
<dbReference type="EC" id="2.8.4.4" evidence="1"/>
<dbReference type="EMBL" id="CP000685">
    <property type="protein sequence ID" value="ABQ07941.1"/>
    <property type="molecule type" value="Genomic_DNA"/>
</dbReference>
<dbReference type="RefSeq" id="WP_012026907.1">
    <property type="nucleotide sequence ID" value="NZ_MUGZ01000004.1"/>
</dbReference>
<dbReference type="SMR" id="A5FA30"/>
<dbReference type="STRING" id="376686.Fjoh_4942"/>
<dbReference type="KEGG" id="fjo:Fjoh_4942"/>
<dbReference type="eggNOG" id="COG0621">
    <property type="taxonomic scope" value="Bacteria"/>
</dbReference>
<dbReference type="HOGENOM" id="CLU_018697_0_1_10"/>
<dbReference type="OrthoDB" id="9805215at2"/>
<dbReference type="Proteomes" id="UP000006694">
    <property type="component" value="Chromosome"/>
</dbReference>
<dbReference type="GO" id="GO:0005829">
    <property type="term" value="C:cytosol"/>
    <property type="evidence" value="ECO:0007669"/>
    <property type="project" value="TreeGrafter"/>
</dbReference>
<dbReference type="GO" id="GO:0051539">
    <property type="term" value="F:4 iron, 4 sulfur cluster binding"/>
    <property type="evidence" value="ECO:0007669"/>
    <property type="project" value="UniProtKB-UniRule"/>
</dbReference>
<dbReference type="GO" id="GO:0035599">
    <property type="term" value="F:aspartic acid methylthiotransferase activity"/>
    <property type="evidence" value="ECO:0007669"/>
    <property type="project" value="TreeGrafter"/>
</dbReference>
<dbReference type="GO" id="GO:0046872">
    <property type="term" value="F:metal ion binding"/>
    <property type="evidence" value="ECO:0007669"/>
    <property type="project" value="UniProtKB-KW"/>
</dbReference>
<dbReference type="GO" id="GO:0103039">
    <property type="term" value="F:protein methylthiotransferase activity"/>
    <property type="evidence" value="ECO:0007669"/>
    <property type="project" value="UniProtKB-EC"/>
</dbReference>
<dbReference type="GO" id="GO:0006400">
    <property type="term" value="P:tRNA modification"/>
    <property type="evidence" value="ECO:0007669"/>
    <property type="project" value="InterPro"/>
</dbReference>
<dbReference type="CDD" id="cd01335">
    <property type="entry name" value="Radical_SAM"/>
    <property type="match status" value="1"/>
</dbReference>
<dbReference type="FunFam" id="3.80.30.20:FF:000001">
    <property type="entry name" value="tRNA-2-methylthio-N(6)-dimethylallyladenosine synthase 2"/>
    <property type="match status" value="1"/>
</dbReference>
<dbReference type="Gene3D" id="3.40.50.12160">
    <property type="entry name" value="Methylthiotransferase, N-terminal domain"/>
    <property type="match status" value="1"/>
</dbReference>
<dbReference type="Gene3D" id="2.40.50.140">
    <property type="entry name" value="Nucleic acid-binding proteins"/>
    <property type="match status" value="1"/>
</dbReference>
<dbReference type="Gene3D" id="3.80.30.20">
    <property type="entry name" value="tm_1862 like domain"/>
    <property type="match status" value="1"/>
</dbReference>
<dbReference type="HAMAP" id="MF_01865">
    <property type="entry name" value="MTTase_RimO"/>
    <property type="match status" value="1"/>
</dbReference>
<dbReference type="InterPro" id="IPR006638">
    <property type="entry name" value="Elp3/MiaA/NifB-like_rSAM"/>
</dbReference>
<dbReference type="InterPro" id="IPR005839">
    <property type="entry name" value="Methylthiotransferase"/>
</dbReference>
<dbReference type="InterPro" id="IPR020612">
    <property type="entry name" value="Methylthiotransferase_CS"/>
</dbReference>
<dbReference type="InterPro" id="IPR013848">
    <property type="entry name" value="Methylthiotransferase_N"/>
</dbReference>
<dbReference type="InterPro" id="IPR038135">
    <property type="entry name" value="Methylthiotransferase_N_sf"/>
</dbReference>
<dbReference type="InterPro" id="IPR012340">
    <property type="entry name" value="NA-bd_OB-fold"/>
</dbReference>
<dbReference type="InterPro" id="IPR005840">
    <property type="entry name" value="Ribosomal_uS12_MeSTrfase_RimO"/>
</dbReference>
<dbReference type="InterPro" id="IPR007197">
    <property type="entry name" value="rSAM"/>
</dbReference>
<dbReference type="InterPro" id="IPR023404">
    <property type="entry name" value="rSAM_horseshoe"/>
</dbReference>
<dbReference type="InterPro" id="IPR002792">
    <property type="entry name" value="TRAM_dom"/>
</dbReference>
<dbReference type="NCBIfam" id="TIGR01125">
    <property type="entry name" value="30S ribosomal protein S12 methylthiotransferase RimO"/>
    <property type="match status" value="1"/>
</dbReference>
<dbReference type="NCBIfam" id="TIGR00089">
    <property type="entry name" value="MiaB/RimO family radical SAM methylthiotransferase"/>
    <property type="match status" value="1"/>
</dbReference>
<dbReference type="PANTHER" id="PTHR43837">
    <property type="entry name" value="RIBOSOMAL PROTEIN S12 METHYLTHIOTRANSFERASE RIMO"/>
    <property type="match status" value="1"/>
</dbReference>
<dbReference type="PANTHER" id="PTHR43837:SF1">
    <property type="entry name" value="RIBOSOMAL PROTEIN US12 METHYLTHIOTRANSFERASE RIMO"/>
    <property type="match status" value="1"/>
</dbReference>
<dbReference type="Pfam" id="PF04055">
    <property type="entry name" value="Radical_SAM"/>
    <property type="match status" value="1"/>
</dbReference>
<dbReference type="Pfam" id="PF18693">
    <property type="entry name" value="TRAM_2"/>
    <property type="match status" value="1"/>
</dbReference>
<dbReference type="Pfam" id="PF00919">
    <property type="entry name" value="UPF0004"/>
    <property type="match status" value="1"/>
</dbReference>
<dbReference type="SFLD" id="SFLDG01082">
    <property type="entry name" value="B12-binding_domain_containing"/>
    <property type="match status" value="1"/>
</dbReference>
<dbReference type="SFLD" id="SFLDS00029">
    <property type="entry name" value="Radical_SAM"/>
    <property type="match status" value="1"/>
</dbReference>
<dbReference type="SFLD" id="SFLDF00274">
    <property type="entry name" value="ribosomal_protein_S12_methylth"/>
    <property type="match status" value="1"/>
</dbReference>
<dbReference type="SMART" id="SM00729">
    <property type="entry name" value="Elp3"/>
    <property type="match status" value="1"/>
</dbReference>
<dbReference type="SUPFAM" id="SSF102114">
    <property type="entry name" value="Radical SAM enzymes"/>
    <property type="match status" value="1"/>
</dbReference>
<dbReference type="PROSITE" id="PS51449">
    <property type="entry name" value="MTTASE_N"/>
    <property type="match status" value="1"/>
</dbReference>
<dbReference type="PROSITE" id="PS01278">
    <property type="entry name" value="MTTASE_RADICAL"/>
    <property type="match status" value="1"/>
</dbReference>
<dbReference type="PROSITE" id="PS51918">
    <property type="entry name" value="RADICAL_SAM"/>
    <property type="match status" value="1"/>
</dbReference>
<dbReference type="PROSITE" id="PS50926">
    <property type="entry name" value="TRAM"/>
    <property type="match status" value="1"/>
</dbReference>
<keyword id="KW-0004">4Fe-4S</keyword>
<keyword id="KW-0963">Cytoplasm</keyword>
<keyword id="KW-0408">Iron</keyword>
<keyword id="KW-0411">Iron-sulfur</keyword>
<keyword id="KW-0479">Metal-binding</keyword>
<keyword id="KW-0949">S-adenosyl-L-methionine</keyword>
<keyword id="KW-0808">Transferase</keyword>
<gene>
    <name evidence="1" type="primary">rimO</name>
    <name type="ordered locus">Fjoh_4942</name>
</gene>
<accession>A5FA30</accession>